<keyword id="KW-0285">Flavoprotein</keyword>
<keyword id="KW-0288">FMN</keyword>
<keyword id="KW-0520">NAD</keyword>
<keyword id="KW-0560">Oxidoreductase</keyword>
<keyword id="KW-1185">Reference proteome</keyword>
<gene>
    <name evidence="1" type="primary">azoR</name>
    <name type="ordered locus">XOO2123</name>
</gene>
<protein>
    <recommendedName>
        <fullName evidence="1">FMN-dependent NADH:quinone oxidoreductase</fullName>
        <ecNumber evidence="1">1.6.5.-</ecNumber>
    </recommendedName>
    <alternativeName>
        <fullName evidence="1">Azo-dye reductase</fullName>
    </alternativeName>
    <alternativeName>
        <fullName evidence="1">FMN-dependent NADH-azo compound oxidoreductase</fullName>
    </alternativeName>
    <alternativeName>
        <fullName evidence="1">FMN-dependent NADH-azoreductase</fullName>
        <ecNumber evidence="1">1.7.1.17</ecNumber>
    </alternativeName>
</protein>
<reference key="1">
    <citation type="journal article" date="2005" name="Nucleic Acids Res.">
        <title>The genome sequence of Xanthomonas oryzae pathovar oryzae KACC10331, the bacterial blight pathogen of rice.</title>
        <authorList>
            <person name="Lee B.-M."/>
            <person name="Park Y.-J."/>
            <person name="Park D.-S."/>
            <person name="Kang H.-W."/>
            <person name="Kim J.-G."/>
            <person name="Song E.-S."/>
            <person name="Park I.-C."/>
            <person name="Yoon U.-H."/>
            <person name="Hahn J.-H."/>
            <person name="Koo B.-S."/>
            <person name="Lee G.-B."/>
            <person name="Kim H."/>
            <person name="Park H.-S."/>
            <person name="Yoon K.-O."/>
            <person name="Kim J.-H."/>
            <person name="Jung C.-H."/>
            <person name="Koh N.-H."/>
            <person name="Seo J.-S."/>
            <person name="Go S.-J."/>
        </authorList>
    </citation>
    <scope>NUCLEOTIDE SEQUENCE [LARGE SCALE GENOMIC DNA]</scope>
    <source>
        <strain>KACC10331 / KXO85</strain>
    </source>
</reference>
<feature type="chain" id="PRO_0000245986" description="FMN-dependent NADH:quinone oxidoreductase">
    <location>
        <begin position="1"/>
        <end position="194"/>
    </location>
</feature>
<feature type="binding site" evidence="1">
    <location>
        <position position="9"/>
    </location>
    <ligand>
        <name>FMN</name>
        <dbReference type="ChEBI" id="CHEBI:58210"/>
    </ligand>
</feature>
<feature type="binding site" evidence="1">
    <location>
        <begin position="15"/>
        <end position="17"/>
    </location>
    <ligand>
        <name>FMN</name>
        <dbReference type="ChEBI" id="CHEBI:58210"/>
    </ligand>
</feature>
<feature type="binding site" evidence="1">
    <location>
        <begin position="85"/>
        <end position="88"/>
    </location>
    <ligand>
        <name>FMN</name>
        <dbReference type="ChEBI" id="CHEBI:58210"/>
    </ligand>
</feature>
<name>AZOR_XANOR</name>
<organism>
    <name type="scientific">Xanthomonas oryzae pv. oryzae (strain KACC10331 / KXO85)</name>
    <dbReference type="NCBI Taxonomy" id="291331"/>
    <lineage>
        <taxon>Bacteria</taxon>
        <taxon>Pseudomonadati</taxon>
        <taxon>Pseudomonadota</taxon>
        <taxon>Gammaproteobacteria</taxon>
        <taxon>Lysobacterales</taxon>
        <taxon>Lysobacteraceae</taxon>
        <taxon>Xanthomonas</taxon>
    </lineage>
</organism>
<dbReference type="EC" id="1.6.5.-" evidence="1"/>
<dbReference type="EC" id="1.7.1.17" evidence="1"/>
<dbReference type="EMBL" id="AE013598">
    <property type="protein sequence ID" value="AAW75377.1"/>
    <property type="molecule type" value="Genomic_DNA"/>
</dbReference>
<dbReference type="SMR" id="Q5H0Z4"/>
<dbReference type="STRING" id="291331.XOO2123"/>
<dbReference type="KEGG" id="xoo:XOO2123"/>
<dbReference type="HOGENOM" id="CLU_088964_0_0_6"/>
<dbReference type="Proteomes" id="UP000006735">
    <property type="component" value="Chromosome"/>
</dbReference>
<dbReference type="GO" id="GO:0009055">
    <property type="term" value="F:electron transfer activity"/>
    <property type="evidence" value="ECO:0007669"/>
    <property type="project" value="UniProtKB-UniRule"/>
</dbReference>
<dbReference type="GO" id="GO:0010181">
    <property type="term" value="F:FMN binding"/>
    <property type="evidence" value="ECO:0007669"/>
    <property type="project" value="UniProtKB-UniRule"/>
</dbReference>
<dbReference type="GO" id="GO:0016652">
    <property type="term" value="F:oxidoreductase activity, acting on NAD(P)H as acceptor"/>
    <property type="evidence" value="ECO:0007669"/>
    <property type="project" value="UniProtKB-UniRule"/>
</dbReference>
<dbReference type="GO" id="GO:0016655">
    <property type="term" value="F:oxidoreductase activity, acting on NAD(P)H, quinone or similar compound as acceptor"/>
    <property type="evidence" value="ECO:0007669"/>
    <property type="project" value="InterPro"/>
</dbReference>
<dbReference type="Gene3D" id="3.40.50.360">
    <property type="match status" value="1"/>
</dbReference>
<dbReference type="HAMAP" id="MF_01216">
    <property type="entry name" value="Azoreductase_type1"/>
    <property type="match status" value="1"/>
</dbReference>
<dbReference type="InterPro" id="IPR003680">
    <property type="entry name" value="Flavodoxin_fold"/>
</dbReference>
<dbReference type="InterPro" id="IPR029039">
    <property type="entry name" value="Flavoprotein-like_sf"/>
</dbReference>
<dbReference type="InterPro" id="IPR050104">
    <property type="entry name" value="FMN-dep_NADH:Q_OxRdtase_AzoR1"/>
</dbReference>
<dbReference type="InterPro" id="IPR023048">
    <property type="entry name" value="NADH:quinone_OxRdtase_FMN_depd"/>
</dbReference>
<dbReference type="PANTHER" id="PTHR43741">
    <property type="entry name" value="FMN-DEPENDENT NADH-AZOREDUCTASE 1"/>
    <property type="match status" value="1"/>
</dbReference>
<dbReference type="PANTHER" id="PTHR43741:SF4">
    <property type="entry name" value="FMN-DEPENDENT NADH:QUINONE OXIDOREDUCTASE"/>
    <property type="match status" value="1"/>
</dbReference>
<dbReference type="Pfam" id="PF02525">
    <property type="entry name" value="Flavodoxin_2"/>
    <property type="match status" value="1"/>
</dbReference>
<dbReference type="SUPFAM" id="SSF52218">
    <property type="entry name" value="Flavoproteins"/>
    <property type="match status" value="1"/>
</dbReference>
<evidence type="ECO:0000255" key="1">
    <source>
        <dbReference type="HAMAP-Rule" id="MF_01216"/>
    </source>
</evidence>
<sequence length="194" mass="20833">MKLLHLDSSALGATSISRELSAAIVAQQRRLYPEVEVTYRDLDRDPIPHLTAQTLAQTDPAEAAAAEAVMQQFLQAEVIVIGAPMYNFAIPSTLKAWIDRIAVAGRTFHYTANGPEGLAGGKRLIIASARGGVYAEPSNDFQEPYLRQLFGFLGIDDITLVRAEGVAYSPQHRADALAAALAGLRAEQDAAVMA</sequence>
<comment type="function">
    <text evidence="1">Quinone reductase that provides resistance to thiol-specific stress caused by electrophilic quinones.</text>
</comment>
<comment type="function">
    <text evidence="1">Also exhibits azoreductase activity. Catalyzes the reductive cleavage of the azo bond in aromatic azo compounds to the corresponding amines.</text>
</comment>
<comment type="catalytic activity">
    <reaction evidence="1">
        <text>2 a quinone + NADH + H(+) = 2 a 1,4-benzosemiquinone + NAD(+)</text>
        <dbReference type="Rhea" id="RHEA:65952"/>
        <dbReference type="ChEBI" id="CHEBI:15378"/>
        <dbReference type="ChEBI" id="CHEBI:57540"/>
        <dbReference type="ChEBI" id="CHEBI:57945"/>
        <dbReference type="ChEBI" id="CHEBI:132124"/>
        <dbReference type="ChEBI" id="CHEBI:134225"/>
    </reaction>
</comment>
<comment type="catalytic activity">
    <reaction evidence="1">
        <text>N,N-dimethyl-1,4-phenylenediamine + anthranilate + 2 NAD(+) = 2-(4-dimethylaminophenyl)diazenylbenzoate + 2 NADH + 2 H(+)</text>
        <dbReference type="Rhea" id="RHEA:55872"/>
        <dbReference type="ChEBI" id="CHEBI:15378"/>
        <dbReference type="ChEBI" id="CHEBI:15783"/>
        <dbReference type="ChEBI" id="CHEBI:16567"/>
        <dbReference type="ChEBI" id="CHEBI:57540"/>
        <dbReference type="ChEBI" id="CHEBI:57945"/>
        <dbReference type="ChEBI" id="CHEBI:71579"/>
        <dbReference type="EC" id="1.7.1.17"/>
    </reaction>
</comment>
<comment type="cofactor">
    <cofactor evidence="1">
        <name>FMN</name>
        <dbReference type="ChEBI" id="CHEBI:58210"/>
    </cofactor>
    <text evidence="1">Binds 1 FMN per subunit.</text>
</comment>
<comment type="subunit">
    <text evidence="1">Homodimer.</text>
</comment>
<comment type="similarity">
    <text evidence="1">Belongs to the azoreductase type 1 family.</text>
</comment>
<proteinExistence type="inferred from homology"/>
<accession>Q5H0Z4</accession>